<reference key="1">
    <citation type="journal article" date="2001" name="Nature">
        <title>Genome sequence of Yersinia pestis, the causative agent of plague.</title>
        <authorList>
            <person name="Parkhill J."/>
            <person name="Wren B.W."/>
            <person name="Thomson N.R."/>
            <person name="Titball R.W."/>
            <person name="Holden M.T.G."/>
            <person name="Prentice M.B."/>
            <person name="Sebaihia M."/>
            <person name="James K.D."/>
            <person name="Churcher C.M."/>
            <person name="Mungall K.L."/>
            <person name="Baker S."/>
            <person name="Basham D."/>
            <person name="Bentley S.D."/>
            <person name="Brooks K."/>
            <person name="Cerdeno-Tarraga A.-M."/>
            <person name="Chillingworth T."/>
            <person name="Cronin A."/>
            <person name="Davies R.M."/>
            <person name="Davis P."/>
            <person name="Dougan G."/>
            <person name="Feltwell T."/>
            <person name="Hamlin N."/>
            <person name="Holroyd S."/>
            <person name="Jagels K."/>
            <person name="Karlyshev A.V."/>
            <person name="Leather S."/>
            <person name="Moule S."/>
            <person name="Oyston P.C.F."/>
            <person name="Quail M.A."/>
            <person name="Rutherford K.M."/>
            <person name="Simmonds M."/>
            <person name="Skelton J."/>
            <person name="Stevens K."/>
            <person name="Whitehead S."/>
            <person name="Barrell B.G."/>
        </authorList>
    </citation>
    <scope>NUCLEOTIDE SEQUENCE [LARGE SCALE GENOMIC DNA]</scope>
    <source>
        <strain>CO-92 / Biovar Orientalis</strain>
    </source>
</reference>
<reference key="2">
    <citation type="journal article" date="2002" name="J. Bacteriol.">
        <title>Genome sequence of Yersinia pestis KIM.</title>
        <authorList>
            <person name="Deng W."/>
            <person name="Burland V."/>
            <person name="Plunkett G. III"/>
            <person name="Boutin A."/>
            <person name="Mayhew G.F."/>
            <person name="Liss P."/>
            <person name="Perna N.T."/>
            <person name="Rose D.J."/>
            <person name="Mau B."/>
            <person name="Zhou S."/>
            <person name="Schwartz D.C."/>
            <person name="Fetherston J.D."/>
            <person name="Lindler L.E."/>
            <person name="Brubaker R.R."/>
            <person name="Plano G.V."/>
            <person name="Straley S.C."/>
            <person name="McDonough K.A."/>
            <person name="Nilles M.L."/>
            <person name="Matson J.S."/>
            <person name="Blattner F.R."/>
            <person name="Perry R.D."/>
        </authorList>
    </citation>
    <scope>NUCLEOTIDE SEQUENCE [LARGE SCALE GENOMIC DNA]</scope>
    <source>
        <strain>KIM10+ / Biovar Mediaevalis</strain>
    </source>
</reference>
<reference key="3">
    <citation type="journal article" date="2004" name="DNA Res.">
        <title>Complete genome sequence of Yersinia pestis strain 91001, an isolate avirulent to humans.</title>
        <authorList>
            <person name="Song Y."/>
            <person name="Tong Z."/>
            <person name="Wang J."/>
            <person name="Wang L."/>
            <person name="Guo Z."/>
            <person name="Han Y."/>
            <person name="Zhang J."/>
            <person name="Pei D."/>
            <person name="Zhou D."/>
            <person name="Qin H."/>
            <person name="Pang X."/>
            <person name="Han Y."/>
            <person name="Zhai J."/>
            <person name="Li M."/>
            <person name="Cui B."/>
            <person name="Qi Z."/>
            <person name="Jin L."/>
            <person name="Dai R."/>
            <person name="Chen F."/>
            <person name="Li S."/>
            <person name="Ye C."/>
            <person name="Du Z."/>
            <person name="Lin W."/>
            <person name="Wang J."/>
            <person name="Yu J."/>
            <person name="Yang H."/>
            <person name="Wang J."/>
            <person name="Huang P."/>
            <person name="Yang R."/>
        </authorList>
    </citation>
    <scope>NUCLEOTIDE SEQUENCE [LARGE SCALE GENOMIC DNA]</scope>
    <source>
        <strain>91001 / Biovar Mediaevalis</strain>
    </source>
</reference>
<sequence length="352" mass="38327">MAISLQKSTVVKVVGVSLVMLLAACSTDQRYKRQVSGDESYLTAPGLKPLNAPSGMILPVQNGEFDVRTVNSQGAVGKQLDIRPPVQPLTLLSGSRAENATDTSKLLLENSPQNRDLWAQVTRVLQDHNWPIASRQDASQTLTTDWIKWNRADEDVQFEGRYQISVQEQGYQLALVVKSLELQQGGKTITQYSEIQRYNSAMLNAIIEGLDKVRADSESSQASRKVGTLDVQSGSDDTGLPLLIVRAPYAVVWERLPAALEKVGMKVTDRSRPQGTVSVTSKSLSSSSWDALGAKDPELPEGDYKLQVGDLDNRSSLQFIGPKGHTLTQAQNDALVAVFQAAFSQTSATAIK</sequence>
<proteinExistence type="inferred from homology"/>
<keyword id="KW-0998">Cell outer membrane</keyword>
<keyword id="KW-0449">Lipoprotein</keyword>
<keyword id="KW-0472">Membrane</keyword>
<keyword id="KW-0564">Palmitate</keyword>
<keyword id="KW-1185">Reference proteome</keyword>
<keyword id="KW-0732">Signal</keyword>
<gene>
    <name evidence="1" type="primary">bamC</name>
    <name type="synonym">dapX</name>
    <name type="synonym">nlpB</name>
    <name type="ordered locus">YPO3061</name>
    <name type="ordered locus">y1419</name>
    <name type="ordered locus">YP_2683</name>
</gene>
<accession>Q0WCK7</accession>
<accession>Q74SD2</accession>
<accession>Q8D0Y2</accession>
<feature type="signal peptide" evidence="1">
    <location>
        <begin position="1"/>
        <end position="24"/>
    </location>
</feature>
<feature type="chain" id="PRO_0000417827" description="Outer membrane protein assembly factor BamC">
    <location>
        <begin position="25"/>
        <end position="352"/>
    </location>
</feature>
<feature type="lipid moiety-binding region" description="N-palmitoyl cysteine" evidence="1">
    <location>
        <position position="25"/>
    </location>
</feature>
<feature type="lipid moiety-binding region" description="S-diacylglycerol cysteine" evidence="1">
    <location>
        <position position="25"/>
    </location>
</feature>
<organism>
    <name type="scientific">Yersinia pestis</name>
    <dbReference type="NCBI Taxonomy" id="632"/>
    <lineage>
        <taxon>Bacteria</taxon>
        <taxon>Pseudomonadati</taxon>
        <taxon>Pseudomonadota</taxon>
        <taxon>Gammaproteobacteria</taxon>
        <taxon>Enterobacterales</taxon>
        <taxon>Yersiniaceae</taxon>
        <taxon>Yersinia</taxon>
    </lineage>
</organism>
<evidence type="ECO:0000255" key="1">
    <source>
        <dbReference type="HAMAP-Rule" id="MF_00924"/>
    </source>
</evidence>
<evidence type="ECO:0000305" key="2"/>
<protein>
    <recommendedName>
        <fullName evidence="1">Outer membrane protein assembly factor BamC</fullName>
    </recommendedName>
</protein>
<comment type="function">
    <text evidence="1">Part of the outer membrane protein assembly complex, which is involved in assembly and insertion of beta-barrel proteins into the outer membrane.</text>
</comment>
<comment type="subunit">
    <text evidence="1">Part of the Bam complex, which is composed of the outer membrane protein BamA, and four lipoproteins BamB, BamC, BamD and BamE.</text>
</comment>
<comment type="subcellular location">
    <subcellularLocation>
        <location evidence="1">Cell outer membrane</location>
        <topology evidence="1">Lipid-anchor</topology>
    </subcellularLocation>
</comment>
<comment type="similarity">
    <text evidence="1">Belongs to the BamC family.</text>
</comment>
<comment type="sequence caution" evidence="2">
    <conflict type="erroneous initiation">
        <sequence resource="EMBL-CDS" id="AAM84991"/>
    </conflict>
    <text>Extended N-terminus.</text>
</comment>
<comment type="sequence caution" evidence="2">
    <conflict type="erroneous initiation">
        <sequence resource="EMBL-CDS" id="AAS62873"/>
    </conflict>
    <text>Extended N-terminus.</text>
</comment>
<name>BAMC_YERPE</name>
<dbReference type="EMBL" id="AL590842">
    <property type="protein sequence ID" value="CAL21663.1"/>
    <property type="molecule type" value="Genomic_DNA"/>
</dbReference>
<dbReference type="EMBL" id="AE009952">
    <property type="protein sequence ID" value="AAM84991.1"/>
    <property type="status" value="ALT_INIT"/>
    <property type="molecule type" value="Genomic_DNA"/>
</dbReference>
<dbReference type="EMBL" id="AE017042">
    <property type="protein sequence ID" value="AAS62873.1"/>
    <property type="status" value="ALT_INIT"/>
    <property type="molecule type" value="Genomic_DNA"/>
</dbReference>
<dbReference type="PIR" id="AD0372">
    <property type="entry name" value="AD0372"/>
</dbReference>
<dbReference type="RefSeq" id="WP_002208557.1">
    <property type="nucleotide sequence ID" value="NZ_WUCK01000121.1"/>
</dbReference>
<dbReference type="RefSeq" id="YP_002347981.1">
    <property type="nucleotide sequence ID" value="NC_003143.1"/>
</dbReference>
<dbReference type="SMR" id="Q0WCK7"/>
<dbReference type="IntAct" id="Q0WCK7">
    <property type="interactions" value="1"/>
</dbReference>
<dbReference type="STRING" id="214092.YPO3061"/>
<dbReference type="PaxDb" id="214092-YPO3061"/>
<dbReference type="DNASU" id="1146366"/>
<dbReference type="EnsemblBacteria" id="AAS62873">
    <property type="protein sequence ID" value="AAS62873"/>
    <property type="gene ID" value="YP_2683"/>
</dbReference>
<dbReference type="GeneID" id="57975641"/>
<dbReference type="KEGG" id="ype:YPO3061"/>
<dbReference type="KEGG" id="ypk:y1419"/>
<dbReference type="KEGG" id="ypm:YP_2683"/>
<dbReference type="PATRIC" id="fig|214092.21.peg.3517"/>
<dbReference type="eggNOG" id="COG3317">
    <property type="taxonomic scope" value="Bacteria"/>
</dbReference>
<dbReference type="HOGENOM" id="CLU_063217_1_0_6"/>
<dbReference type="OMA" id="YNVFMTN"/>
<dbReference type="OrthoDB" id="5686855at2"/>
<dbReference type="Proteomes" id="UP000000815">
    <property type="component" value="Chromosome"/>
</dbReference>
<dbReference type="Proteomes" id="UP000001019">
    <property type="component" value="Chromosome"/>
</dbReference>
<dbReference type="Proteomes" id="UP000002490">
    <property type="component" value="Chromosome"/>
</dbReference>
<dbReference type="GO" id="GO:0009279">
    <property type="term" value="C:cell outer membrane"/>
    <property type="evidence" value="ECO:0007669"/>
    <property type="project" value="UniProtKB-SubCell"/>
</dbReference>
<dbReference type="GO" id="GO:0043165">
    <property type="term" value="P:Gram-negative-bacterium-type cell outer membrane assembly"/>
    <property type="evidence" value="ECO:0007669"/>
    <property type="project" value="UniProtKB-UniRule"/>
</dbReference>
<dbReference type="GO" id="GO:0051205">
    <property type="term" value="P:protein insertion into membrane"/>
    <property type="evidence" value="ECO:0007669"/>
    <property type="project" value="UniProtKB-UniRule"/>
</dbReference>
<dbReference type="Gene3D" id="3.30.530.50">
    <property type="match status" value="1"/>
</dbReference>
<dbReference type="Gene3D" id="3.30.310.170">
    <property type="entry name" value="Outer membrane protein assembly factor BamC"/>
    <property type="match status" value="1"/>
</dbReference>
<dbReference type="HAMAP" id="MF_00924">
    <property type="entry name" value="OM_assembly_BamC"/>
    <property type="match status" value="1"/>
</dbReference>
<dbReference type="InterPro" id="IPR014524">
    <property type="entry name" value="BamC"/>
</dbReference>
<dbReference type="InterPro" id="IPR042268">
    <property type="entry name" value="BamC_C"/>
</dbReference>
<dbReference type="InterPro" id="IPR010653">
    <property type="entry name" value="NlpB/DapX"/>
</dbReference>
<dbReference type="NCBIfam" id="NF008674">
    <property type="entry name" value="PRK11679.1"/>
    <property type="match status" value="1"/>
</dbReference>
<dbReference type="Pfam" id="PF06804">
    <property type="entry name" value="Lipoprotein_18"/>
    <property type="match status" value="1"/>
</dbReference>
<dbReference type="PIRSF" id="PIRSF026343">
    <property type="entry name" value="NlpB"/>
    <property type="match status" value="1"/>
</dbReference>
<dbReference type="PROSITE" id="PS51257">
    <property type="entry name" value="PROKAR_LIPOPROTEIN"/>
    <property type="match status" value="1"/>
</dbReference>